<proteinExistence type="evidence at protein level"/>
<sequence length="313" mass="35126">MSLASGPGPGWLLFSFGMGLVSGSKCPNNCLCQAQEVICTGKQLTEYPLDIPLNTRRLFLNENRITSLPAMHLGLLSDLVYLDCQNNRIREVMDYTFIGVFKLIYLDLSSNNLTSISPFTFSVLSNLVQLNIANNPHLLSLHKFTFANTTSLRYLDLRNTGLQTLDSAALYHLTTLETLFLSGNPWKCNCSFLDFAIFLIVFHMDPSDDLNATCVEPTELTGWPITRVGNPLRYMCITHLDHKDYIFLLLIGFCIFAAGTVAAWLTGVCAVLYQNTRHKSSEEDEDEAGTRVEVSRRIFQTQTSSVQEFPQLI</sequence>
<protein>
    <recommendedName>
        <fullName>Leucine-rich repeat-containing protein 52</fullName>
    </recommendedName>
    <alternativeName>
        <fullName>BK channel auxiliary gamma subunit LRRC52</fullName>
    </alternativeName>
</protein>
<keyword id="KW-1003">Cell membrane</keyword>
<keyword id="KW-1015">Disulfide bond</keyword>
<keyword id="KW-0325">Glycoprotein</keyword>
<keyword id="KW-0407">Ion channel</keyword>
<keyword id="KW-0406">Ion transport</keyword>
<keyword id="KW-0433">Leucine-rich repeat</keyword>
<keyword id="KW-0472">Membrane</keyword>
<keyword id="KW-1267">Proteomics identification</keyword>
<keyword id="KW-1185">Reference proteome</keyword>
<keyword id="KW-0677">Repeat</keyword>
<keyword id="KW-0732">Signal</keyword>
<keyword id="KW-0812">Transmembrane</keyword>
<keyword id="KW-1133">Transmembrane helix</keyword>
<keyword id="KW-0813">Transport</keyword>
<reference key="1">
    <citation type="journal article" date="2004" name="Nat. Genet.">
        <title>Complete sequencing and characterization of 21,243 full-length human cDNAs.</title>
        <authorList>
            <person name="Ota T."/>
            <person name="Suzuki Y."/>
            <person name="Nishikawa T."/>
            <person name="Otsuki T."/>
            <person name="Sugiyama T."/>
            <person name="Irie R."/>
            <person name="Wakamatsu A."/>
            <person name="Hayashi K."/>
            <person name="Sato H."/>
            <person name="Nagai K."/>
            <person name="Kimura K."/>
            <person name="Makita H."/>
            <person name="Sekine M."/>
            <person name="Obayashi M."/>
            <person name="Nishi T."/>
            <person name="Shibahara T."/>
            <person name="Tanaka T."/>
            <person name="Ishii S."/>
            <person name="Yamamoto J."/>
            <person name="Saito K."/>
            <person name="Kawai Y."/>
            <person name="Isono Y."/>
            <person name="Nakamura Y."/>
            <person name="Nagahari K."/>
            <person name="Murakami K."/>
            <person name="Yasuda T."/>
            <person name="Iwayanagi T."/>
            <person name="Wagatsuma M."/>
            <person name="Shiratori A."/>
            <person name="Sudo H."/>
            <person name="Hosoiri T."/>
            <person name="Kaku Y."/>
            <person name="Kodaira H."/>
            <person name="Kondo H."/>
            <person name="Sugawara M."/>
            <person name="Takahashi M."/>
            <person name="Kanda K."/>
            <person name="Yokoi T."/>
            <person name="Furuya T."/>
            <person name="Kikkawa E."/>
            <person name="Omura Y."/>
            <person name="Abe K."/>
            <person name="Kamihara K."/>
            <person name="Katsuta N."/>
            <person name="Sato K."/>
            <person name="Tanikawa M."/>
            <person name="Yamazaki M."/>
            <person name="Ninomiya K."/>
            <person name="Ishibashi T."/>
            <person name="Yamashita H."/>
            <person name="Murakawa K."/>
            <person name="Fujimori K."/>
            <person name="Tanai H."/>
            <person name="Kimata M."/>
            <person name="Watanabe M."/>
            <person name="Hiraoka S."/>
            <person name="Chiba Y."/>
            <person name="Ishida S."/>
            <person name="Ono Y."/>
            <person name="Takiguchi S."/>
            <person name="Watanabe S."/>
            <person name="Yosida M."/>
            <person name="Hotuta T."/>
            <person name="Kusano J."/>
            <person name="Kanehori K."/>
            <person name="Takahashi-Fujii A."/>
            <person name="Hara H."/>
            <person name="Tanase T.-O."/>
            <person name="Nomura Y."/>
            <person name="Togiya S."/>
            <person name="Komai F."/>
            <person name="Hara R."/>
            <person name="Takeuchi K."/>
            <person name="Arita M."/>
            <person name="Imose N."/>
            <person name="Musashino K."/>
            <person name="Yuuki H."/>
            <person name="Oshima A."/>
            <person name="Sasaki N."/>
            <person name="Aotsuka S."/>
            <person name="Yoshikawa Y."/>
            <person name="Matsunawa H."/>
            <person name="Ichihara T."/>
            <person name="Shiohata N."/>
            <person name="Sano S."/>
            <person name="Moriya S."/>
            <person name="Momiyama H."/>
            <person name="Satoh N."/>
            <person name="Takami S."/>
            <person name="Terashima Y."/>
            <person name="Suzuki O."/>
            <person name="Nakagawa S."/>
            <person name="Senoh A."/>
            <person name="Mizoguchi H."/>
            <person name="Goto Y."/>
            <person name="Shimizu F."/>
            <person name="Wakebe H."/>
            <person name="Hishigaki H."/>
            <person name="Watanabe T."/>
            <person name="Sugiyama A."/>
            <person name="Takemoto M."/>
            <person name="Kawakami B."/>
            <person name="Yamazaki M."/>
            <person name="Watanabe K."/>
            <person name="Kumagai A."/>
            <person name="Itakura S."/>
            <person name="Fukuzumi Y."/>
            <person name="Fujimori Y."/>
            <person name="Komiyama M."/>
            <person name="Tashiro H."/>
            <person name="Tanigami A."/>
            <person name="Fujiwara T."/>
            <person name="Ono T."/>
            <person name="Yamada K."/>
            <person name="Fujii Y."/>
            <person name="Ozaki K."/>
            <person name="Hirao M."/>
            <person name="Ohmori Y."/>
            <person name="Kawabata A."/>
            <person name="Hikiji T."/>
            <person name="Kobatake N."/>
            <person name="Inagaki H."/>
            <person name="Ikema Y."/>
            <person name="Okamoto S."/>
            <person name="Okitani R."/>
            <person name="Kawakami T."/>
            <person name="Noguchi S."/>
            <person name="Itoh T."/>
            <person name="Shigeta K."/>
            <person name="Senba T."/>
            <person name="Matsumura K."/>
            <person name="Nakajima Y."/>
            <person name="Mizuno T."/>
            <person name="Morinaga M."/>
            <person name="Sasaki M."/>
            <person name="Togashi T."/>
            <person name="Oyama M."/>
            <person name="Hata H."/>
            <person name="Watanabe M."/>
            <person name="Komatsu T."/>
            <person name="Mizushima-Sugano J."/>
            <person name="Satoh T."/>
            <person name="Shirai Y."/>
            <person name="Takahashi Y."/>
            <person name="Nakagawa K."/>
            <person name="Okumura K."/>
            <person name="Nagase T."/>
            <person name="Nomura N."/>
            <person name="Kikuchi H."/>
            <person name="Masuho Y."/>
            <person name="Yamashita R."/>
            <person name="Nakai K."/>
            <person name="Yada T."/>
            <person name="Nakamura Y."/>
            <person name="Ohara O."/>
            <person name="Isogai T."/>
            <person name="Sugano S."/>
        </authorList>
    </citation>
    <scope>NUCLEOTIDE SEQUENCE [LARGE SCALE MRNA]</scope>
    <source>
        <tissue>Testis</tissue>
    </source>
</reference>
<reference key="2">
    <citation type="journal article" date="2006" name="Nature">
        <title>The DNA sequence and biological annotation of human chromosome 1.</title>
        <authorList>
            <person name="Gregory S.G."/>
            <person name="Barlow K.F."/>
            <person name="McLay K.E."/>
            <person name="Kaul R."/>
            <person name="Swarbreck D."/>
            <person name="Dunham A."/>
            <person name="Scott C.E."/>
            <person name="Howe K.L."/>
            <person name="Woodfine K."/>
            <person name="Spencer C.C.A."/>
            <person name="Jones M.C."/>
            <person name="Gillson C."/>
            <person name="Searle S."/>
            <person name="Zhou Y."/>
            <person name="Kokocinski F."/>
            <person name="McDonald L."/>
            <person name="Evans R."/>
            <person name="Phillips K."/>
            <person name="Atkinson A."/>
            <person name="Cooper R."/>
            <person name="Jones C."/>
            <person name="Hall R.E."/>
            <person name="Andrews T.D."/>
            <person name="Lloyd C."/>
            <person name="Ainscough R."/>
            <person name="Almeida J.P."/>
            <person name="Ambrose K.D."/>
            <person name="Anderson F."/>
            <person name="Andrew R.W."/>
            <person name="Ashwell R.I.S."/>
            <person name="Aubin K."/>
            <person name="Babbage A.K."/>
            <person name="Bagguley C.L."/>
            <person name="Bailey J."/>
            <person name="Beasley H."/>
            <person name="Bethel G."/>
            <person name="Bird C.P."/>
            <person name="Bray-Allen S."/>
            <person name="Brown J.Y."/>
            <person name="Brown A.J."/>
            <person name="Buckley D."/>
            <person name="Burton J."/>
            <person name="Bye J."/>
            <person name="Carder C."/>
            <person name="Chapman J.C."/>
            <person name="Clark S.Y."/>
            <person name="Clarke G."/>
            <person name="Clee C."/>
            <person name="Cobley V."/>
            <person name="Collier R.E."/>
            <person name="Corby N."/>
            <person name="Coville G.J."/>
            <person name="Davies J."/>
            <person name="Deadman R."/>
            <person name="Dunn M."/>
            <person name="Earthrowl M."/>
            <person name="Ellington A.G."/>
            <person name="Errington H."/>
            <person name="Frankish A."/>
            <person name="Frankland J."/>
            <person name="French L."/>
            <person name="Garner P."/>
            <person name="Garnett J."/>
            <person name="Gay L."/>
            <person name="Ghori M.R.J."/>
            <person name="Gibson R."/>
            <person name="Gilby L.M."/>
            <person name="Gillett W."/>
            <person name="Glithero R.J."/>
            <person name="Grafham D.V."/>
            <person name="Griffiths C."/>
            <person name="Griffiths-Jones S."/>
            <person name="Grocock R."/>
            <person name="Hammond S."/>
            <person name="Harrison E.S.I."/>
            <person name="Hart E."/>
            <person name="Haugen E."/>
            <person name="Heath P.D."/>
            <person name="Holmes S."/>
            <person name="Holt K."/>
            <person name="Howden P.J."/>
            <person name="Hunt A.R."/>
            <person name="Hunt S.E."/>
            <person name="Hunter G."/>
            <person name="Isherwood J."/>
            <person name="James R."/>
            <person name="Johnson C."/>
            <person name="Johnson D."/>
            <person name="Joy A."/>
            <person name="Kay M."/>
            <person name="Kershaw J.K."/>
            <person name="Kibukawa M."/>
            <person name="Kimberley A.M."/>
            <person name="King A."/>
            <person name="Knights A.J."/>
            <person name="Lad H."/>
            <person name="Laird G."/>
            <person name="Lawlor S."/>
            <person name="Leongamornlert D.A."/>
            <person name="Lloyd D.M."/>
            <person name="Loveland J."/>
            <person name="Lovell J."/>
            <person name="Lush M.J."/>
            <person name="Lyne R."/>
            <person name="Martin S."/>
            <person name="Mashreghi-Mohammadi M."/>
            <person name="Matthews L."/>
            <person name="Matthews N.S.W."/>
            <person name="McLaren S."/>
            <person name="Milne S."/>
            <person name="Mistry S."/>
            <person name="Moore M.J.F."/>
            <person name="Nickerson T."/>
            <person name="O'Dell C.N."/>
            <person name="Oliver K."/>
            <person name="Palmeiri A."/>
            <person name="Palmer S.A."/>
            <person name="Parker A."/>
            <person name="Patel D."/>
            <person name="Pearce A.V."/>
            <person name="Peck A.I."/>
            <person name="Pelan S."/>
            <person name="Phelps K."/>
            <person name="Phillimore B.J."/>
            <person name="Plumb R."/>
            <person name="Rajan J."/>
            <person name="Raymond C."/>
            <person name="Rouse G."/>
            <person name="Saenphimmachak C."/>
            <person name="Sehra H.K."/>
            <person name="Sheridan E."/>
            <person name="Shownkeen R."/>
            <person name="Sims S."/>
            <person name="Skuce C.D."/>
            <person name="Smith M."/>
            <person name="Steward C."/>
            <person name="Subramanian S."/>
            <person name="Sycamore N."/>
            <person name="Tracey A."/>
            <person name="Tromans A."/>
            <person name="Van Helmond Z."/>
            <person name="Wall M."/>
            <person name="Wallis J.M."/>
            <person name="White S."/>
            <person name="Whitehead S.L."/>
            <person name="Wilkinson J.E."/>
            <person name="Willey D.L."/>
            <person name="Williams H."/>
            <person name="Wilming L."/>
            <person name="Wray P.W."/>
            <person name="Wu Z."/>
            <person name="Coulson A."/>
            <person name="Vaudin M."/>
            <person name="Sulston J.E."/>
            <person name="Durbin R.M."/>
            <person name="Hubbard T."/>
            <person name="Wooster R."/>
            <person name="Dunham I."/>
            <person name="Carter N.P."/>
            <person name="McVean G."/>
            <person name="Ross M.T."/>
            <person name="Harrow J."/>
            <person name="Olson M.V."/>
            <person name="Beck S."/>
            <person name="Rogers J."/>
            <person name="Bentley D.R."/>
        </authorList>
    </citation>
    <scope>NUCLEOTIDE SEQUENCE [LARGE SCALE GENOMIC DNA]</scope>
</reference>
<reference key="3">
    <citation type="journal article" date="2004" name="Genome Res.">
        <title>The status, quality, and expansion of the NIH full-length cDNA project: the Mammalian Gene Collection (MGC).</title>
        <authorList>
            <consortium name="The MGC Project Team"/>
        </authorList>
    </citation>
    <scope>NUCLEOTIDE SEQUENCE [LARGE SCALE MRNA]</scope>
</reference>
<reference key="4">
    <citation type="journal article" date="2012" name="Proc. Natl. Acad. Sci. U.S.A.">
        <title>BK potassium channel modulation by leucine-rich repeat-containing proteins.</title>
        <authorList>
            <person name="Yan J."/>
            <person name="Aldrich R.W."/>
        </authorList>
    </citation>
    <scope>FUNCTION</scope>
    <scope>SUBUNIT</scope>
    <scope>DISULFIDE BONDS</scope>
    <scope>TISSUE SPECIFICITY</scope>
</reference>
<reference key="5">
    <citation type="journal article" date="2012" name="Proc. Natl. Acad. Sci. U.S.A.">
        <title>Functional and structural analysis of the human SLO3 pH- and voltage-gated K+ channel.</title>
        <authorList>
            <person name="Leonetti M.D."/>
            <person name="Yuan P."/>
            <person name="Hsiung Y."/>
            <person name="Mackinnon R."/>
        </authorList>
    </citation>
    <scope>FUNCTION</scope>
</reference>
<dbReference type="EMBL" id="AK098677">
    <property type="protein sequence ID" value="BAC05375.1"/>
    <property type="molecule type" value="mRNA"/>
</dbReference>
<dbReference type="EMBL" id="AL157714">
    <property type="status" value="NOT_ANNOTATED_CDS"/>
    <property type="molecule type" value="Genomic_DNA"/>
</dbReference>
<dbReference type="EMBL" id="BC132981">
    <property type="protein sequence ID" value="AAI32982.1"/>
    <property type="molecule type" value="mRNA"/>
</dbReference>
<dbReference type="EMBL" id="BC132983">
    <property type="protein sequence ID" value="AAI32984.1"/>
    <property type="molecule type" value="mRNA"/>
</dbReference>
<dbReference type="CCDS" id="CCDS30930.1"/>
<dbReference type="RefSeq" id="NP_001005214.2">
    <property type="nucleotide sequence ID" value="NM_001005214.4"/>
</dbReference>
<dbReference type="SMR" id="Q8N7C0"/>
<dbReference type="BioGRID" id="136818">
    <property type="interactions" value="27"/>
</dbReference>
<dbReference type="FunCoup" id="Q8N7C0">
    <property type="interactions" value="182"/>
</dbReference>
<dbReference type="IntAct" id="Q8N7C0">
    <property type="interactions" value="17"/>
</dbReference>
<dbReference type="STRING" id="9606.ENSP00000294818"/>
<dbReference type="GlyCosmos" id="Q8N7C0">
    <property type="glycosylation" value="4 sites, No reported glycans"/>
</dbReference>
<dbReference type="GlyGen" id="Q8N7C0">
    <property type="glycosylation" value="4 sites, 2 N-linked glycans (1 site)"/>
</dbReference>
<dbReference type="PhosphoSitePlus" id="Q8N7C0"/>
<dbReference type="BioMuta" id="LRRC52"/>
<dbReference type="DMDM" id="90185259"/>
<dbReference type="MassIVE" id="Q8N7C0"/>
<dbReference type="PaxDb" id="9606-ENSP00000294818"/>
<dbReference type="PeptideAtlas" id="Q8N7C0"/>
<dbReference type="ProteomicsDB" id="72285"/>
<dbReference type="Antibodypedia" id="47069">
    <property type="antibodies" value="79 antibodies from 17 providers"/>
</dbReference>
<dbReference type="DNASU" id="440699"/>
<dbReference type="Ensembl" id="ENST00000294818.2">
    <property type="protein sequence ID" value="ENSP00000294818.2"/>
    <property type="gene ID" value="ENSG00000162763.4"/>
</dbReference>
<dbReference type="GeneID" id="440699"/>
<dbReference type="KEGG" id="hsa:440699"/>
<dbReference type="MANE-Select" id="ENST00000294818.2">
    <property type="protein sequence ID" value="ENSP00000294818.2"/>
    <property type="RefSeq nucleotide sequence ID" value="NM_001005214.4"/>
    <property type="RefSeq protein sequence ID" value="NP_001005214.2"/>
</dbReference>
<dbReference type="UCSC" id="uc001gde.3">
    <property type="organism name" value="human"/>
</dbReference>
<dbReference type="AGR" id="HGNC:32156"/>
<dbReference type="CTD" id="440699"/>
<dbReference type="DisGeNET" id="440699"/>
<dbReference type="GeneCards" id="LRRC52"/>
<dbReference type="HGNC" id="HGNC:32156">
    <property type="gene designation" value="LRRC52"/>
</dbReference>
<dbReference type="HPA" id="ENSG00000162763">
    <property type="expression patterns" value="Tissue enriched (testis)"/>
</dbReference>
<dbReference type="MIM" id="615218">
    <property type="type" value="gene"/>
</dbReference>
<dbReference type="neXtProt" id="NX_Q8N7C0"/>
<dbReference type="OpenTargets" id="ENSG00000162763"/>
<dbReference type="PharmGKB" id="PA142671512"/>
<dbReference type="VEuPathDB" id="HostDB:ENSG00000162763"/>
<dbReference type="eggNOG" id="KOG0619">
    <property type="taxonomic scope" value="Eukaryota"/>
</dbReference>
<dbReference type="GeneTree" id="ENSGT00940000156906"/>
<dbReference type="HOGENOM" id="CLU_000288_18_10_1"/>
<dbReference type="InParanoid" id="Q8N7C0"/>
<dbReference type="OMA" id="QDYIFLC"/>
<dbReference type="OrthoDB" id="4691307at2759"/>
<dbReference type="PAN-GO" id="Q8N7C0">
    <property type="GO annotations" value="4 GO annotations based on evolutionary models"/>
</dbReference>
<dbReference type="PhylomeDB" id="Q8N7C0"/>
<dbReference type="TreeFam" id="TF334689"/>
<dbReference type="PathwayCommons" id="Q8N7C0"/>
<dbReference type="Reactome" id="R-HSA-9662360">
    <property type="pathway name" value="Sensory processing of sound by inner hair cells of the cochlea"/>
</dbReference>
<dbReference type="SignaLink" id="Q8N7C0"/>
<dbReference type="BioGRID-ORCS" id="440699">
    <property type="hits" value="13 hits in 1137 CRISPR screens"/>
</dbReference>
<dbReference type="GenomeRNAi" id="440699"/>
<dbReference type="Pharos" id="Q8N7C0">
    <property type="development level" value="Tbio"/>
</dbReference>
<dbReference type="PRO" id="PR:Q8N7C0"/>
<dbReference type="Proteomes" id="UP000005640">
    <property type="component" value="Chromosome 1"/>
</dbReference>
<dbReference type="RNAct" id="Q8N7C0">
    <property type="molecule type" value="protein"/>
</dbReference>
<dbReference type="Bgee" id="ENSG00000162763">
    <property type="expression patterns" value="Expressed in male germ line stem cell (sensu Vertebrata) in testis and 45 other cell types or tissues"/>
</dbReference>
<dbReference type="GO" id="GO:0005886">
    <property type="term" value="C:plasma membrane"/>
    <property type="evidence" value="ECO:0000250"/>
    <property type="project" value="UniProtKB"/>
</dbReference>
<dbReference type="GO" id="GO:0008076">
    <property type="term" value="C:voltage-gated potassium channel complex"/>
    <property type="evidence" value="ECO:0000314"/>
    <property type="project" value="UniProtKB"/>
</dbReference>
<dbReference type="GO" id="GO:0099104">
    <property type="term" value="F:potassium channel activator activity"/>
    <property type="evidence" value="ECO:0000314"/>
    <property type="project" value="UniProtKB"/>
</dbReference>
<dbReference type="GO" id="GO:0044325">
    <property type="term" value="F:transmembrane transporter binding"/>
    <property type="evidence" value="ECO:0000353"/>
    <property type="project" value="UniProtKB"/>
</dbReference>
<dbReference type="GO" id="GO:0005249">
    <property type="term" value="F:voltage-gated potassium channel activity"/>
    <property type="evidence" value="ECO:0000314"/>
    <property type="project" value="UniProtKB"/>
</dbReference>
<dbReference type="GO" id="GO:0051649">
    <property type="term" value="P:establishment of localization in cell"/>
    <property type="evidence" value="ECO:0007669"/>
    <property type="project" value="Ensembl"/>
</dbReference>
<dbReference type="GO" id="GO:1903818">
    <property type="term" value="P:positive regulation of voltage-gated potassium channel activity"/>
    <property type="evidence" value="ECO:0000314"/>
    <property type="project" value="UniProtKB"/>
</dbReference>
<dbReference type="GO" id="GO:0071805">
    <property type="term" value="P:potassium ion transmembrane transport"/>
    <property type="evidence" value="ECO:0000314"/>
    <property type="project" value="UniProtKB"/>
</dbReference>
<dbReference type="FunFam" id="3.80.10.10:FF:000015">
    <property type="entry name" value="Leucine rich repeat containing 38"/>
    <property type="match status" value="1"/>
</dbReference>
<dbReference type="Gene3D" id="3.80.10.10">
    <property type="entry name" value="Ribonuclease Inhibitor"/>
    <property type="match status" value="1"/>
</dbReference>
<dbReference type="InterPro" id="IPR051432">
    <property type="entry name" value="KCNMA1_auxiliary"/>
</dbReference>
<dbReference type="InterPro" id="IPR001611">
    <property type="entry name" value="Leu-rich_rpt"/>
</dbReference>
<dbReference type="InterPro" id="IPR003591">
    <property type="entry name" value="Leu-rich_rpt_typical-subtyp"/>
</dbReference>
<dbReference type="InterPro" id="IPR032675">
    <property type="entry name" value="LRR_dom_sf"/>
</dbReference>
<dbReference type="InterPro" id="IPR000372">
    <property type="entry name" value="LRRNT"/>
</dbReference>
<dbReference type="PANTHER" id="PTHR46473">
    <property type="entry name" value="GH08155P"/>
    <property type="match status" value="1"/>
</dbReference>
<dbReference type="PANTHER" id="PTHR46473:SF6">
    <property type="entry name" value="LEUCINE-RICH REPEAT-CONTAINING PROTEIN 52"/>
    <property type="match status" value="1"/>
</dbReference>
<dbReference type="Pfam" id="PF13855">
    <property type="entry name" value="LRR_8"/>
    <property type="match status" value="1"/>
</dbReference>
<dbReference type="SMART" id="SM00369">
    <property type="entry name" value="LRR_TYP"/>
    <property type="match status" value="4"/>
</dbReference>
<dbReference type="SMART" id="SM00013">
    <property type="entry name" value="LRRNT"/>
    <property type="match status" value="1"/>
</dbReference>
<dbReference type="SUPFAM" id="SSF52058">
    <property type="entry name" value="L domain-like"/>
    <property type="match status" value="1"/>
</dbReference>
<dbReference type="PROSITE" id="PS51450">
    <property type="entry name" value="LRR"/>
    <property type="match status" value="6"/>
</dbReference>
<comment type="function">
    <text evidence="3 4">Auxiliary protein of the large-conductance, voltage and calcium-activated potassium channel (BK alpha). Modulates gating properties by producing a marked shift in the BK channel's voltage dependence of activation in the hyperpolarizing direction, and in the absence of calcium. KCNU1 channel auxiliary protein. Modulates KCNU1 gating properties.</text>
</comment>
<comment type="subunit">
    <text evidence="1 3">May interact with KCNU1; this interaction may be required for LRRC52 stability and may change the channel gating properties (By similarity). Interacts with KCNMA1.</text>
</comment>
<comment type="interaction">
    <interactant intactId="EBI-12176213">
        <id>Q8N7C0</id>
    </interactant>
    <interactant intactId="EBI-16439278">
        <id>Q6FHY5</id>
        <label>MEOX2</label>
    </interactant>
    <organismsDiffer>false</organismsDiffer>
    <experiments>3</experiments>
</comment>
<comment type="subcellular location">
    <subcellularLocation>
        <location evidence="1">Cell membrane</location>
        <topology evidence="1">Single-pass membrane protein</topology>
    </subcellularLocation>
    <text>Expression at the cell surface may require the presence of KCNU1.</text>
</comment>
<comment type="tissue specificity">
    <text evidence="3">Mainly expressed in testis and skeletal muscle.</text>
</comment>
<comment type="domain">
    <text evidence="1">The transmembrane domain is necessary for interaction with KCNMA1.</text>
</comment>
<comment type="PTM">
    <text evidence="1">N-glycosylated.</text>
</comment>
<name>LRC52_HUMAN</name>
<feature type="signal peptide" evidence="2">
    <location>
        <begin position="1"/>
        <end position="23"/>
    </location>
</feature>
<feature type="chain" id="PRO_0000226826" description="Leucine-rich repeat-containing protein 52">
    <location>
        <begin position="24"/>
        <end position="313"/>
    </location>
</feature>
<feature type="topological domain" description="Extracellular" evidence="2">
    <location>
        <begin position="24"/>
        <end position="244"/>
    </location>
</feature>
<feature type="transmembrane region" description="Helical" evidence="2">
    <location>
        <begin position="245"/>
        <end position="265"/>
    </location>
</feature>
<feature type="topological domain" description="Cytoplasmic" evidence="2">
    <location>
        <begin position="266"/>
        <end position="313"/>
    </location>
</feature>
<feature type="domain" description="LRRNT">
    <location>
        <begin position="24"/>
        <end position="53"/>
    </location>
</feature>
<feature type="repeat" description="LRR 1">
    <location>
        <begin position="54"/>
        <end position="75"/>
    </location>
</feature>
<feature type="repeat" description="LRR 2">
    <location>
        <begin position="78"/>
        <end position="99"/>
    </location>
</feature>
<feature type="repeat" description="LRR 3">
    <location>
        <begin position="102"/>
        <end position="123"/>
    </location>
</feature>
<feature type="repeat" description="LRR 4">
    <location>
        <begin position="126"/>
        <end position="148"/>
    </location>
</feature>
<feature type="repeat" description="LRR 5">
    <location>
        <begin position="151"/>
        <end position="172"/>
    </location>
</feature>
<feature type="domain" description="LRRCT">
    <location>
        <begin position="184"/>
        <end position="238"/>
    </location>
</feature>
<feature type="glycosylation site" description="N-linked (GlcNAc...) asparagine" evidence="2">
    <location>
        <position position="112"/>
    </location>
</feature>
<feature type="glycosylation site" description="N-linked (GlcNAc...) asparagine" evidence="2">
    <location>
        <position position="148"/>
    </location>
</feature>
<feature type="glycosylation site" description="N-linked (GlcNAc...) asparagine" evidence="2">
    <location>
        <position position="189"/>
    </location>
</feature>
<feature type="glycosylation site" description="N-linked (GlcNAc...) asparagine" evidence="2">
    <location>
        <position position="211"/>
    </location>
</feature>
<feature type="disulfide bond" evidence="2">
    <location>
        <begin position="26"/>
        <end position="32"/>
    </location>
</feature>
<feature type="disulfide bond" evidence="2">
    <location>
        <begin position="30"/>
        <end position="39"/>
    </location>
</feature>
<feature type="disulfide bond" evidence="2">
    <location>
        <begin position="188"/>
        <end position="214"/>
    </location>
</feature>
<feature type="disulfide bond" evidence="2">
    <location>
        <begin position="190"/>
        <end position="236"/>
    </location>
</feature>
<feature type="sequence variant" id="VAR_051122" description="In dbSNP:rs17407838.">
    <original>D</original>
    <variation>E</variation>
    <location>
        <position position="209"/>
    </location>
</feature>
<feature type="sequence conflict" description="In Ref. 1; BAC05375." evidence="5" ref="1">
    <original>F</original>
    <variation>S</variation>
    <location>
        <position position="309"/>
    </location>
</feature>
<organism>
    <name type="scientific">Homo sapiens</name>
    <name type="common">Human</name>
    <dbReference type="NCBI Taxonomy" id="9606"/>
    <lineage>
        <taxon>Eukaryota</taxon>
        <taxon>Metazoa</taxon>
        <taxon>Chordata</taxon>
        <taxon>Craniata</taxon>
        <taxon>Vertebrata</taxon>
        <taxon>Euteleostomi</taxon>
        <taxon>Mammalia</taxon>
        <taxon>Eutheria</taxon>
        <taxon>Euarchontoglires</taxon>
        <taxon>Primates</taxon>
        <taxon>Haplorrhini</taxon>
        <taxon>Catarrhini</taxon>
        <taxon>Hominidae</taxon>
        <taxon>Homo</taxon>
    </lineage>
</organism>
<accession>Q8N7C0</accession>
<accession>A2RUN7</accession>
<accession>Q5T9K5</accession>
<evidence type="ECO:0000250" key="1"/>
<evidence type="ECO:0000255" key="2"/>
<evidence type="ECO:0000269" key="3">
    <source>
    </source>
</evidence>
<evidence type="ECO:0000269" key="4">
    <source>
    </source>
</evidence>
<evidence type="ECO:0000305" key="5"/>
<gene>
    <name type="primary">LRRC52</name>
</gene>